<proteinExistence type="inferred from homology"/>
<gene>
    <name type="primary">BUD32</name>
    <name type="ordered locus">DEHA2G19998g</name>
</gene>
<reference key="1">
    <citation type="journal article" date="2004" name="Nature">
        <title>Genome evolution in yeasts.</title>
        <authorList>
            <person name="Dujon B."/>
            <person name="Sherman D."/>
            <person name="Fischer G."/>
            <person name="Durrens P."/>
            <person name="Casaregola S."/>
            <person name="Lafontaine I."/>
            <person name="de Montigny J."/>
            <person name="Marck C."/>
            <person name="Neuveglise C."/>
            <person name="Talla E."/>
            <person name="Goffard N."/>
            <person name="Frangeul L."/>
            <person name="Aigle M."/>
            <person name="Anthouard V."/>
            <person name="Babour A."/>
            <person name="Barbe V."/>
            <person name="Barnay S."/>
            <person name="Blanchin S."/>
            <person name="Beckerich J.-M."/>
            <person name="Beyne E."/>
            <person name="Bleykasten C."/>
            <person name="Boisrame A."/>
            <person name="Boyer J."/>
            <person name="Cattolico L."/>
            <person name="Confanioleri F."/>
            <person name="de Daruvar A."/>
            <person name="Despons L."/>
            <person name="Fabre E."/>
            <person name="Fairhead C."/>
            <person name="Ferry-Dumazet H."/>
            <person name="Groppi A."/>
            <person name="Hantraye F."/>
            <person name="Hennequin C."/>
            <person name="Jauniaux N."/>
            <person name="Joyet P."/>
            <person name="Kachouri R."/>
            <person name="Kerrest A."/>
            <person name="Koszul R."/>
            <person name="Lemaire M."/>
            <person name="Lesur I."/>
            <person name="Ma L."/>
            <person name="Muller H."/>
            <person name="Nicaud J.-M."/>
            <person name="Nikolski M."/>
            <person name="Oztas S."/>
            <person name="Ozier-Kalogeropoulos O."/>
            <person name="Pellenz S."/>
            <person name="Potier S."/>
            <person name="Richard G.-F."/>
            <person name="Straub M.-L."/>
            <person name="Suleau A."/>
            <person name="Swennen D."/>
            <person name="Tekaia F."/>
            <person name="Wesolowski-Louvel M."/>
            <person name="Westhof E."/>
            <person name="Wirth B."/>
            <person name="Zeniou-Meyer M."/>
            <person name="Zivanovic Y."/>
            <person name="Bolotin-Fukuhara M."/>
            <person name="Thierry A."/>
            <person name="Bouchier C."/>
            <person name="Caudron B."/>
            <person name="Scarpelli C."/>
            <person name="Gaillardin C."/>
            <person name="Weissenbach J."/>
            <person name="Wincker P."/>
            <person name="Souciet J.-L."/>
        </authorList>
    </citation>
    <scope>NUCLEOTIDE SEQUENCE [LARGE SCALE GENOMIC DNA]</scope>
    <source>
        <strain>ATCC 36239 / CBS 767 / BCRC 21394 / JCM 1990 / NBRC 0083 / IGC 2968</strain>
    </source>
</reference>
<comment type="function">
    <text evidence="1">Component of the EKC/KEOPS complex that is required for the formation of a threonylcarbamoyl group on adenosine at position 37 (t(6)A37) in tRNAs that read codons beginning with adenine. The complex is probably involved in the transfer of the threonylcarbamoyl moiety of threonylcarbamoyl-AMP (TC-AMP) to the N6 group of A37. BUD32 has ATPase activity in the context of the EKC/KEOPS complex and likely plays a supporting role to the catalytic subunit KAE1. The EKC/KEOPS complex also promotes both telomere uncapping and telomere elongation. The complex is required for efficient recruitment of transcriptional coactivators.</text>
</comment>
<comment type="catalytic activity">
    <reaction evidence="1">
        <text>L-seryl-[protein] + ATP = O-phospho-L-seryl-[protein] + ADP + H(+)</text>
        <dbReference type="Rhea" id="RHEA:17989"/>
        <dbReference type="Rhea" id="RHEA-COMP:9863"/>
        <dbReference type="Rhea" id="RHEA-COMP:11604"/>
        <dbReference type="ChEBI" id="CHEBI:15378"/>
        <dbReference type="ChEBI" id="CHEBI:29999"/>
        <dbReference type="ChEBI" id="CHEBI:30616"/>
        <dbReference type="ChEBI" id="CHEBI:83421"/>
        <dbReference type="ChEBI" id="CHEBI:456216"/>
        <dbReference type="EC" id="2.7.11.1"/>
    </reaction>
</comment>
<comment type="catalytic activity">
    <reaction evidence="1">
        <text>L-threonyl-[protein] + ATP = O-phospho-L-threonyl-[protein] + ADP + H(+)</text>
        <dbReference type="Rhea" id="RHEA:46608"/>
        <dbReference type="Rhea" id="RHEA-COMP:11060"/>
        <dbReference type="Rhea" id="RHEA-COMP:11605"/>
        <dbReference type="ChEBI" id="CHEBI:15378"/>
        <dbReference type="ChEBI" id="CHEBI:30013"/>
        <dbReference type="ChEBI" id="CHEBI:30616"/>
        <dbReference type="ChEBI" id="CHEBI:61977"/>
        <dbReference type="ChEBI" id="CHEBI:456216"/>
        <dbReference type="EC" id="2.7.11.1"/>
    </reaction>
</comment>
<comment type="subunit">
    <text evidence="1">Component of the EKC/KEOPS complex composed of at least BUD32, CGI121, GON7, KAE1 and PCC1; the whole complex dimerizes.</text>
</comment>
<comment type="subcellular location">
    <subcellularLocation>
        <location evidence="1">Cytoplasm</location>
    </subcellularLocation>
    <subcellularLocation>
        <location evidence="1">Nucleus</location>
    </subcellularLocation>
    <subcellularLocation>
        <location evidence="1">Chromosome</location>
        <location evidence="1">Telomere</location>
    </subcellularLocation>
</comment>
<comment type="domain">
    <text evidence="1 2">This protein is considered an atypical serine/threonine kinase, because it lacks the conventional structural elements necessary for the substrate recognition as well as a lysine residue that in all other serine/threonine kinases participates in the catalytic event (By similarity). BUD32 has protein kinase activity in vitro, but in the context of the EKC/KEOPS complex, the catalytic subunit KAE1 switches the activity of BUD32 from kinase into ATPase (By similarity).</text>
</comment>
<comment type="similarity">
    <text evidence="5">Belongs to the protein kinase superfamily. BUD32 family.</text>
</comment>
<name>BUD32_DEBHA</name>
<organism>
    <name type="scientific">Debaryomyces hansenii (strain ATCC 36239 / CBS 767 / BCRC 21394 / JCM 1990 / NBRC 0083 / IGC 2968)</name>
    <name type="common">Yeast</name>
    <name type="synonym">Torulaspora hansenii</name>
    <dbReference type="NCBI Taxonomy" id="284592"/>
    <lineage>
        <taxon>Eukaryota</taxon>
        <taxon>Fungi</taxon>
        <taxon>Dikarya</taxon>
        <taxon>Ascomycota</taxon>
        <taxon>Saccharomycotina</taxon>
        <taxon>Pichiomycetes</taxon>
        <taxon>Debaryomycetaceae</taxon>
        <taxon>Debaryomyces</taxon>
    </lineage>
</organism>
<keyword id="KW-0010">Activator</keyword>
<keyword id="KW-0067">ATP-binding</keyword>
<keyword id="KW-0158">Chromosome</keyword>
<keyword id="KW-0963">Cytoplasm</keyword>
<keyword id="KW-0378">Hydrolase</keyword>
<keyword id="KW-0418">Kinase</keyword>
<keyword id="KW-0547">Nucleotide-binding</keyword>
<keyword id="KW-0539">Nucleus</keyword>
<keyword id="KW-0597">Phosphoprotein</keyword>
<keyword id="KW-1185">Reference proteome</keyword>
<keyword id="KW-0723">Serine/threonine-protein kinase</keyword>
<keyword id="KW-0779">Telomere</keyword>
<keyword id="KW-0804">Transcription</keyword>
<keyword id="KW-0805">Transcription regulation</keyword>
<keyword id="KW-0808">Transferase</keyword>
<keyword id="KW-0819">tRNA processing</keyword>
<feature type="chain" id="PRO_0000278913" description="EKC/KEOPS complex subunit BUD32">
    <location>
        <begin position="1"/>
        <end position="260"/>
    </location>
</feature>
<feature type="domain" description="Protein kinase" evidence="3">
    <location>
        <begin position="15"/>
        <end position="260"/>
    </location>
</feature>
<feature type="active site" description="Proton acceptor" evidence="3 4">
    <location>
        <position position="162"/>
    </location>
</feature>
<feature type="binding site" evidence="3">
    <location>
        <begin position="21"/>
        <end position="29"/>
    </location>
    <ligand>
        <name>ATP</name>
        <dbReference type="ChEBI" id="CHEBI:30616"/>
    </ligand>
</feature>
<feature type="binding site" evidence="3">
    <location>
        <position position="52"/>
    </location>
    <ligand>
        <name>ATP</name>
        <dbReference type="ChEBI" id="CHEBI:30616"/>
    </ligand>
</feature>
<evidence type="ECO:0000250" key="1">
    <source>
        <dbReference type="UniProtKB" id="P53323"/>
    </source>
</evidence>
<evidence type="ECO:0000250" key="2">
    <source>
        <dbReference type="UniProtKB" id="Q9UYB9"/>
    </source>
</evidence>
<evidence type="ECO:0000255" key="3">
    <source>
        <dbReference type="PROSITE-ProRule" id="PRU00159"/>
    </source>
</evidence>
<evidence type="ECO:0000255" key="4">
    <source>
        <dbReference type="PROSITE-ProRule" id="PRU10028"/>
    </source>
</evidence>
<evidence type="ECO:0000305" key="5"/>
<dbReference type="EC" id="3.6.-.-" evidence="2"/>
<dbReference type="EC" id="2.7.11.1" evidence="1"/>
<dbReference type="EMBL" id="CR382139">
    <property type="protein sequence ID" value="CAG90922.2"/>
    <property type="molecule type" value="Genomic_DNA"/>
</dbReference>
<dbReference type="RefSeq" id="XP_462413.2">
    <property type="nucleotide sequence ID" value="XM_462413.1"/>
</dbReference>
<dbReference type="SMR" id="Q6BHA8"/>
<dbReference type="FunCoup" id="Q6BHA8">
    <property type="interactions" value="913"/>
</dbReference>
<dbReference type="STRING" id="284592.Q6BHA8"/>
<dbReference type="GeneID" id="2905358"/>
<dbReference type="KEGG" id="dha:DEHA2G19998g"/>
<dbReference type="VEuPathDB" id="FungiDB:DEHA2G19998g"/>
<dbReference type="eggNOG" id="KOG3087">
    <property type="taxonomic scope" value="Eukaryota"/>
</dbReference>
<dbReference type="HOGENOM" id="CLU_063953_1_1_1"/>
<dbReference type="InParanoid" id="Q6BHA8"/>
<dbReference type="OMA" id="HKLYMEY"/>
<dbReference type="OrthoDB" id="3399at2759"/>
<dbReference type="Proteomes" id="UP000000599">
    <property type="component" value="Chromosome G"/>
</dbReference>
<dbReference type="GO" id="GO:0000781">
    <property type="term" value="C:chromosome, telomeric region"/>
    <property type="evidence" value="ECO:0007669"/>
    <property type="project" value="UniProtKB-SubCell"/>
</dbReference>
<dbReference type="GO" id="GO:0005829">
    <property type="term" value="C:cytosol"/>
    <property type="evidence" value="ECO:0007669"/>
    <property type="project" value="TreeGrafter"/>
</dbReference>
<dbReference type="GO" id="GO:0000408">
    <property type="term" value="C:EKC/KEOPS complex"/>
    <property type="evidence" value="ECO:0007669"/>
    <property type="project" value="TreeGrafter"/>
</dbReference>
<dbReference type="GO" id="GO:0005634">
    <property type="term" value="C:nucleus"/>
    <property type="evidence" value="ECO:0007669"/>
    <property type="project" value="UniProtKB-SubCell"/>
</dbReference>
<dbReference type="GO" id="GO:0005524">
    <property type="term" value="F:ATP binding"/>
    <property type="evidence" value="ECO:0007669"/>
    <property type="project" value="UniProtKB-KW"/>
</dbReference>
<dbReference type="GO" id="GO:0016787">
    <property type="term" value="F:hydrolase activity"/>
    <property type="evidence" value="ECO:0007669"/>
    <property type="project" value="UniProtKB-KW"/>
</dbReference>
<dbReference type="GO" id="GO:0106310">
    <property type="term" value="F:protein serine kinase activity"/>
    <property type="evidence" value="ECO:0007669"/>
    <property type="project" value="RHEA"/>
</dbReference>
<dbReference type="GO" id="GO:0004674">
    <property type="term" value="F:protein serine/threonine kinase activity"/>
    <property type="evidence" value="ECO:0007669"/>
    <property type="project" value="UniProtKB-KW"/>
</dbReference>
<dbReference type="GO" id="GO:0008033">
    <property type="term" value="P:tRNA processing"/>
    <property type="evidence" value="ECO:0007669"/>
    <property type="project" value="UniProtKB-KW"/>
</dbReference>
<dbReference type="GO" id="GO:0070525">
    <property type="term" value="P:tRNA threonylcarbamoyladenosine metabolic process"/>
    <property type="evidence" value="ECO:0007669"/>
    <property type="project" value="TreeGrafter"/>
</dbReference>
<dbReference type="FunFam" id="1.10.510.10:FF:000745">
    <property type="entry name" value="Serine/threonine-protein kinase BUD32"/>
    <property type="match status" value="1"/>
</dbReference>
<dbReference type="Gene3D" id="3.30.200.20">
    <property type="entry name" value="Phosphorylase Kinase, domain 1"/>
    <property type="match status" value="1"/>
</dbReference>
<dbReference type="Gene3D" id="1.10.510.10">
    <property type="entry name" value="Transferase(Phosphotransferase) domain 1"/>
    <property type="match status" value="1"/>
</dbReference>
<dbReference type="InterPro" id="IPR022495">
    <property type="entry name" value="Bud32"/>
</dbReference>
<dbReference type="InterPro" id="IPR011009">
    <property type="entry name" value="Kinase-like_dom_sf"/>
</dbReference>
<dbReference type="InterPro" id="IPR000719">
    <property type="entry name" value="Prot_kinase_dom"/>
</dbReference>
<dbReference type="InterPro" id="IPR018934">
    <property type="entry name" value="RIO_dom"/>
</dbReference>
<dbReference type="InterPro" id="IPR008266">
    <property type="entry name" value="Tyr_kinase_AS"/>
</dbReference>
<dbReference type="NCBIfam" id="TIGR03724">
    <property type="entry name" value="arch_bud32"/>
    <property type="match status" value="1"/>
</dbReference>
<dbReference type="PANTHER" id="PTHR12209:SF0">
    <property type="entry name" value="EKC_KEOPS COMPLEX SUBUNIT TP53RK"/>
    <property type="match status" value="1"/>
</dbReference>
<dbReference type="PANTHER" id="PTHR12209">
    <property type="entry name" value="NON-SPECIFIC SERINE/THREONINE PROTEIN KINASE"/>
    <property type="match status" value="1"/>
</dbReference>
<dbReference type="Pfam" id="PF01163">
    <property type="entry name" value="RIO1"/>
    <property type="match status" value="1"/>
</dbReference>
<dbReference type="SUPFAM" id="SSF56112">
    <property type="entry name" value="Protein kinase-like (PK-like)"/>
    <property type="match status" value="1"/>
</dbReference>
<dbReference type="PROSITE" id="PS50011">
    <property type="entry name" value="PROTEIN_KINASE_DOM"/>
    <property type="match status" value="1"/>
</dbReference>
<dbReference type="PROSITE" id="PS00109">
    <property type="entry name" value="PROTEIN_KINASE_TYR"/>
    <property type="match status" value="1"/>
</dbReference>
<protein>
    <recommendedName>
        <fullName>EKC/KEOPS complex subunit BUD32</fullName>
        <ecNumber evidence="2">3.6.-.-</ecNumber>
    </recommendedName>
    <alternativeName>
        <fullName>Atypical serine/threonine protein kinase BUD32</fullName>
        <ecNumber evidence="1">2.7.11.1</ecNumber>
    </alternativeName>
</protein>
<accession>Q6BHA8</accession>
<sequence length="260" mass="29991">MTDHIVKKAQECLPNIPLTVISQGAEALVFYTDVHPYANEPYLQNRGKYVIKYRPSKPYRHPKVDSSITKSRTVGEVKFMYKLNKLNINSPRIISADYNNGIIWMEYIGYSLPNGDVSSFKNWLWYLERNNQDCTSESVEKMCFKVGQLIGKLHLHEMIHGDLTSSNILLNDDEPVLIDFGLSSYSGLAEDRAVDLYVLERAITSTHSVYAKEYNQWLLQGYEDVHKHKEFGKQGQKKLVEVLKKLDDVRLRGRKRSMLG</sequence>